<gene>
    <name type="primary">marC</name>
    <name type="ordered locus">ECDH10B_1660</name>
</gene>
<evidence type="ECO:0000250" key="1"/>
<evidence type="ECO:0000255" key="2"/>
<evidence type="ECO:0000305" key="3"/>
<comment type="subcellular location">
    <subcellularLocation>
        <location evidence="1">Cell inner membrane</location>
        <topology evidence="1">Multi-pass membrane protein</topology>
    </subcellularLocation>
</comment>
<comment type="similarity">
    <text evidence="3">Belongs to the UPF0056 (MarC) family.</text>
</comment>
<keyword id="KW-0997">Cell inner membrane</keyword>
<keyword id="KW-1003">Cell membrane</keyword>
<keyword id="KW-0472">Membrane</keyword>
<keyword id="KW-0812">Transmembrane</keyword>
<keyword id="KW-1133">Transmembrane helix</keyword>
<proteinExistence type="inferred from homology"/>
<protein>
    <recommendedName>
        <fullName>UPF0056 inner membrane protein MarC</fullName>
    </recommendedName>
</protein>
<name>MARC_ECODH</name>
<sequence>MLDLFKAIGLGLVVLLPLANPLTTVALFLGLAGNMNSAERNRQSLMASVYVFAIMMVAYYAGQLVMDTFGISIPGLRIAGGLIVAFIGFRMLFPQQKAIDSPEAKSKSEELEDEPSANIAFVPLAMPSTAGPGTIAMIISSASTVRQSSTFADWVLMVAPPLIFFLVAVILWGSLRSSGAIMRLVGKGGIEAISRLMGFLLVCMGVQFIINGILEIIKTYH</sequence>
<feature type="chain" id="PRO_0000343813" description="UPF0056 inner membrane protein MarC">
    <location>
        <begin position="1"/>
        <end position="221"/>
    </location>
</feature>
<feature type="topological domain" description="Periplasmic" evidence="2">
    <location>
        <begin position="1"/>
        <end position="7"/>
    </location>
</feature>
<feature type="transmembrane region" description="Helical" evidence="2">
    <location>
        <begin position="8"/>
        <end position="28"/>
    </location>
</feature>
<feature type="topological domain" description="Cytoplasmic" evidence="2">
    <location>
        <begin position="29"/>
        <end position="44"/>
    </location>
</feature>
<feature type="transmembrane region" description="Helical" evidence="2">
    <location>
        <begin position="45"/>
        <end position="65"/>
    </location>
</feature>
<feature type="topological domain" description="Periplasmic" evidence="2">
    <location>
        <begin position="66"/>
        <end position="68"/>
    </location>
</feature>
<feature type="transmembrane region" description="Helical" evidence="2">
    <location>
        <begin position="69"/>
        <end position="89"/>
    </location>
</feature>
<feature type="topological domain" description="Cytoplasmic" evidence="2">
    <location>
        <begin position="90"/>
        <end position="118"/>
    </location>
</feature>
<feature type="transmembrane region" description="Helical" evidence="2">
    <location>
        <begin position="119"/>
        <end position="139"/>
    </location>
</feature>
<feature type="topological domain" description="Periplasmic" evidence="2">
    <location>
        <begin position="140"/>
        <end position="154"/>
    </location>
</feature>
<feature type="transmembrane region" description="Helical" evidence="2">
    <location>
        <begin position="155"/>
        <end position="175"/>
    </location>
</feature>
<feature type="topological domain" description="Cytoplasmic" evidence="2">
    <location>
        <begin position="176"/>
        <end position="196"/>
    </location>
</feature>
<feature type="transmembrane region" description="Helical" evidence="2">
    <location>
        <begin position="197"/>
        <end position="217"/>
    </location>
</feature>
<feature type="topological domain" description="Periplasmic" evidence="2">
    <location>
        <begin position="218"/>
        <end position="221"/>
    </location>
</feature>
<accession>B1XEB6</accession>
<reference key="1">
    <citation type="journal article" date="2008" name="J. Bacteriol.">
        <title>The complete genome sequence of Escherichia coli DH10B: insights into the biology of a laboratory workhorse.</title>
        <authorList>
            <person name="Durfee T."/>
            <person name="Nelson R."/>
            <person name="Baldwin S."/>
            <person name="Plunkett G. III"/>
            <person name="Burland V."/>
            <person name="Mau B."/>
            <person name="Petrosino J.F."/>
            <person name="Qin X."/>
            <person name="Muzny D.M."/>
            <person name="Ayele M."/>
            <person name="Gibbs R.A."/>
            <person name="Csorgo B."/>
            <person name="Posfai G."/>
            <person name="Weinstock G.M."/>
            <person name="Blattner F.R."/>
        </authorList>
    </citation>
    <scope>NUCLEOTIDE SEQUENCE [LARGE SCALE GENOMIC DNA]</scope>
    <source>
        <strain>K12 / DH10B</strain>
    </source>
</reference>
<dbReference type="EMBL" id="CP000948">
    <property type="protein sequence ID" value="ACB02738.1"/>
    <property type="molecule type" value="Genomic_DNA"/>
</dbReference>
<dbReference type="RefSeq" id="WP_000885033.1">
    <property type="nucleotide sequence ID" value="NC_010473.1"/>
</dbReference>
<dbReference type="GeneID" id="93775693"/>
<dbReference type="KEGG" id="ecd:ECDH10B_1660"/>
<dbReference type="HOGENOM" id="CLU_079909_2_0_6"/>
<dbReference type="GO" id="GO:0005886">
    <property type="term" value="C:plasma membrane"/>
    <property type="evidence" value="ECO:0007669"/>
    <property type="project" value="UniProtKB-SubCell"/>
</dbReference>
<dbReference type="InterPro" id="IPR002771">
    <property type="entry name" value="Multi_antbiot-R_MarC"/>
</dbReference>
<dbReference type="NCBIfam" id="TIGR00427">
    <property type="entry name" value="NAAT family transporter"/>
    <property type="match status" value="1"/>
</dbReference>
<dbReference type="NCBIfam" id="NF008228">
    <property type="entry name" value="PRK10995.1"/>
    <property type="match status" value="1"/>
</dbReference>
<dbReference type="PANTHER" id="PTHR33508:SF2">
    <property type="entry name" value="UPF0056 INNER MEMBRANE PROTEIN MARC"/>
    <property type="match status" value="1"/>
</dbReference>
<dbReference type="PANTHER" id="PTHR33508">
    <property type="entry name" value="UPF0056 MEMBRANE PROTEIN YHCE"/>
    <property type="match status" value="1"/>
</dbReference>
<dbReference type="Pfam" id="PF01914">
    <property type="entry name" value="MarC"/>
    <property type="match status" value="1"/>
</dbReference>
<organism>
    <name type="scientific">Escherichia coli (strain K12 / DH10B)</name>
    <dbReference type="NCBI Taxonomy" id="316385"/>
    <lineage>
        <taxon>Bacteria</taxon>
        <taxon>Pseudomonadati</taxon>
        <taxon>Pseudomonadota</taxon>
        <taxon>Gammaproteobacteria</taxon>
        <taxon>Enterobacterales</taxon>
        <taxon>Enterobacteriaceae</taxon>
        <taxon>Escherichia</taxon>
    </lineage>
</organism>